<name>H2A2_DEBHA</name>
<feature type="initiator methionine" description="Removed" evidence="1">
    <location>
        <position position="1"/>
    </location>
</feature>
<feature type="chain" id="PRO_0000228729" description="Histone H2A.2">
    <location>
        <begin position="2"/>
        <end position="131"/>
    </location>
</feature>
<feature type="region of interest" description="Disordered" evidence="2">
    <location>
        <begin position="1"/>
        <end position="22"/>
    </location>
</feature>
<feature type="short sequence motif" description="[ST]-Q motif">
    <location>
        <begin position="128"/>
        <end position="129"/>
    </location>
</feature>
<feature type="modified residue" description="N-acetylserine" evidence="1">
    <location>
        <position position="2"/>
    </location>
</feature>
<feature type="modified residue" description="N6-acetyllysine" evidence="1">
    <location>
        <position position="5"/>
    </location>
</feature>
<feature type="modified residue" description="N6-acetyllysine" evidence="1">
    <location>
        <position position="7"/>
    </location>
</feature>
<feature type="modified residue" description="N5-methylglutamine" evidence="1">
    <location>
        <position position="105"/>
    </location>
</feature>
<feature type="modified residue" description="Phosphoserine" evidence="1">
    <location>
        <position position="128"/>
    </location>
</feature>
<reference key="1">
    <citation type="journal article" date="2004" name="Nature">
        <title>Genome evolution in yeasts.</title>
        <authorList>
            <person name="Dujon B."/>
            <person name="Sherman D."/>
            <person name="Fischer G."/>
            <person name="Durrens P."/>
            <person name="Casaregola S."/>
            <person name="Lafontaine I."/>
            <person name="de Montigny J."/>
            <person name="Marck C."/>
            <person name="Neuveglise C."/>
            <person name="Talla E."/>
            <person name="Goffard N."/>
            <person name="Frangeul L."/>
            <person name="Aigle M."/>
            <person name="Anthouard V."/>
            <person name="Babour A."/>
            <person name="Barbe V."/>
            <person name="Barnay S."/>
            <person name="Blanchin S."/>
            <person name="Beckerich J.-M."/>
            <person name="Beyne E."/>
            <person name="Bleykasten C."/>
            <person name="Boisrame A."/>
            <person name="Boyer J."/>
            <person name="Cattolico L."/>
            <person name="Confanioleri F."/>
            <person name="de Daruvar A."/>
            <person name="Despons L."/>
            <person name="Fabre E."/>
            <person name="Fairhead C."/>
            <person name="Ferry-Dumazet H."/>
            <person name="Groppi A."/>
            <person name="Hantraye F."/>
            <person name="Hennequin C."/>
            <person name="Jauniaux N."/>
            <person name="Joyet P."/>
            <person name="Kachouri R."/>
            <person name="Kerrest A."/>
            <person name="Koszul R."/>
            <person name="Lemaire M."/>
            <person name="Lesur I."/>
            <person name="Ma L."/>
            <person name="Muller H."/>
            <person name="Nicaud J.-M."/>
            <person name="Nikolski M."/>
            <person name="Oztas S."/>
            <person name="Ozier-Kalogeropoulos O."/>
            <person name="Pellenz S."/>
            <person name="Potier S."/>
            <person name="Richard G.-F."/>
            <person name="Straub M.-L."/>
            <person name="Suleau A."/>
            <person name="Swennen D."/>
            <person name="Tekaia F."/>
            <person name="Wesolowski-Louvel M."/>
            <person name="Westhof E."/>
            <person name="Wirth B."/>
            <person name="Zeniou-Meyer M."/>
            <person name="Zivanovic Y."/>
            <person name="Bolotin-Fukuhara M."/>
            <person name="Thierry A."/>
            <person name="Bouchier C."/>
            <person name="Caudron B."/>
            <person name="Scarpelli C."/>
            <person name="Gaillardin C."/>
            <person name="Weissenbach J."/>
            <person name="Wincker P."/>
            <person name="Souciet J.-L."/>
        </authorList>
    </citation>
    <scope>NUCLEOTIDE SEQUENCE [LARGE SCALE GENOMIC DNA]</scope>
    <source>
        <strain>ATCC 36239 / CBS 767 / BCRC 21394 / JCM 1990 / NBRC 0083 / IGC 2968</strain>
    </source>
</reference>
<evidence type="ECO:0000250" key="1"/>
<evidence type="ECO:0000256" key="2">
    <source>
        <dbReference type="SAM" id="MobiDB-lite"/>
    </source>
</evidence>
<evidence type="ECO:0000305" key="3"/>
<organism>
    <name type="scientific">Debaryomyces hansenii (strain ATCC 36239 / CBS 767 / BCRC 21394 / JCM 1990 / NBRC 0083 / IGC 2968)</name>
    <name type="common">Yeast</name>
    <name type="synonym">Torulaspora hansenii</name>
    <dbReference type="NCBI Taxonomy" id="284592"/>
    <lineage>
        <taxon>Eukaryota</taxon>
        <taxon>Fungi</taxon>
        <taxon>Dikarya</taxon>
        <taxon>Ascomycota</taxon>
        <taxon>Saccharomycotina</taxon>
        <taxon>Pichiomycetes</taxon>
        <taxon>Debaryomycetaceae</taxon>
        <taxon>Debaryomyces</taxon>
    </lineage>
</organism>
<proteinExistence type="inferred from homology"/>
<comment type="function">
    <text>Core component of nucleosome which plays a central role in DNA double strand break (DSB) repair. Nucleosomes wrap and compact DNA into chromatin, limiting DNA accessibility to the cellular machineries which require DNA as a template. Histones thereby play a central role in transcription regulation, DNA repair, DNA replication and chromosomal stability. DNA accessibility is regulated via a complex set of post-translational modifications of histones, also called histone code, and nucleosome remodeling.</text>
</comment>
<comment type="subunit">
    <text>The nucleosome is a histone octamer containing two molecules each of H2A, H2B, H3 and H4 assembled in one H3-H4 heterotetramer and two H2A-H2B heterodimers. The octamer wraps approximately 147 bp of DNA.</text>
</comment>
<comment type="subcellular location">
    <subcellularLocation>
        <location evidence="1">Nucleus</location>
    </subcellularLocation>
    <subcellularLocation>
        <location evidence="1">Chromosome</location>
    </subcellularLocation>
</comment>
<comment type="domain">
    <text>The [ST]-Q motif constitutes a recognition sequence for kinases from the PI3/PI4-kinase family.</text>
</comment>
<comment type="PTM">
    <text evidence="1">Phosphorylated to form H2AS128ph (gamma-H2A) in response to DNA double-strand breaks (DSBs) generated by exogenous genotoxic agents and by stalled replication forks. Phosphorylation is dependent on the DNA damage checkpoint kinases MEC1/ATR and TEL1/ATM, spreads on either side of a detected DSB site and may mark the surrounding chromatin for recruitment of proteins required for DNA damage signaling and repair. Gamma-H2A is removed from the DNA prior to the strand invasion-primer extension step of the repair process and subsequently dephosphorylated. Dephosphorylation is necessary for efficient recovery from the DNA damage checkpoint (By similarity).</text>
</comment>
<comment type="PTM">
    <text evidence="1">Acetylated by ESA1 to form H2AK4ac and H2AK7ac.</text>
</comment>
<comment type="miscellaneous">
    <text evidence="3">In contrast to vertebrates and insects, its C-terminus is not monoubiquitinated.</text>
</comment>
<comment type="similarity">
    <text evidence="3">Belongs to the histone H2A family.</text>
</comment>
<comment type="caution">
    <text evidence="3">To ensure consistency between histone entries, we follow the 'Brno' nomenclature for histone modifications, with positions referring to those used in the literature for the 'closest' model organism. Due to slight variations in histone sequences between organisms and to the presence of initiator methionine in UniProtKB/Swiss-Prot sequences, the actual positions of modified amino acids in the sequence generally differ. In this entry the following conventions are used: H2AK4ac = acetylated Lys-5; H2AK7ac = acetylated Lys-7; H2AS128ph = phosphorylated Ser-128.</text>
</comment>
<dbReference type="EMBL" id="CR382136">
    <property type="protein sequence ID" value="CAG87378.1"/>
    <property type="molecule type" value="Genomic_DNA"/>
</dbReference>
<dbReference type="RefSeq" id="XP_459207.1">
    <property type="nucleotide sequence ID" value="XM_459207.1"/>
</dbReference>
<dbReference type="SMR" id="Q6BRG3"/>
<dbReference type="FunCoup" id="Q6BRG3">
    <property type="interactions" value="1189"/>
</dbReference>
<dbReference type="STRING" id="284592.Q6BRG3"/>
<dbReference type="GeneID" id="2901667"/>
<dbReference type="KEGG" id="dha:DEHA2D16588g"/>
<dbReference type="VEuPathDB" id="FungiDB:DEHA2D16588g"/>
<dbReference type="eggNOG" id="KOG1756">
    <property type="taxonomic scope" value="Eukaryota"/>
</dbReference>
<dbReference type="HOGENOM" id="CLU_062828_3_1_1"/>
<dbReference type="InParanoid" id="Q6BRG3"/>
<dbReference type="OMA" id="ANEMFIN"/>
<dbReference type="OrthoDB" id="9421954at2759"/>
<dbReference type="Proteomes" id="UP000000599">
    <property type="component" value="Chromosome D"/>
</dbReference>
<dbReference type="GO" id="GO:0000786">
    <property type="term" value="C:nucleosome"/>
    <property type="evidence" value="ECO:0007669"/>
    <property type="project" value="UniProtKB-KW"/>
</dbReference>
<dbReference type="GO" id="GO:0005634">
    <property type="term" value="C:nucleus"/>
    <property type="evidence" value="ECO:0007669"/>
    <property type="project" value="UniProtKB-SubCell"/>
</dbReference>
<dbReference type="GO" id="GO:0003677">
    <property type="term" value="F:DNA binding"/>
    <property type="evidence" value="ECO:0007669"/>
    <property type="project" value="UniProtKB-KW"/>
</dbReference>
<dbReference type="GO" id="GO:0046982">
    <property type="term" value="F:protein heterodimerization activity"/>
    <property type="evidence" value="ECO:0007669"/>
    <property type="project" value="InterPro"/>
</dbReference>
<dbReference type="GO" id="GO:0030527">
    <property type="term" value="F:structural constituent of chromatin"/>
    <property type="evidence" value="ECO:0007669"/>
    <property type="project" value="InterPro"/>
</dbReference>
<dbReference type="GO" id="GO:0006281">
    <property type="term" value="P:DNA repair"/>
    <property type="evidence" value="ECO:0007669"/>
    <property type="project" value="UniProtKB-KW"/>
</dbReference>
<dbReference type="CDD" id="cd00074">
    <property type="entry name" value="HFD_H2A"/>
    <property type="match status" value="1"/>
</dbReference>
<dbReference type="FunFam" id="1.10.20.10:FF:000008">
    <property type="entry name" value="Histone H2A"/>
    <property type="match status" value="1"/>
</dbReference>
<dbReference type="Gene3D" id="1.10.20.10">
    <property type="entry name" value="Histone, subunit A"/>
    <property type="match status" value="1"/>
</dbReference>
<dbReference type="InterPro" id="IPR009072">
    <property type="entry name" value="Histone-fold"/>
</dbReference>
<dbReference type="InterPro" id="IPR002119">
    <property type="entry name" value="Histone_H2A"/>
</dbReference>
<dbReference type="InterPro" id="IPR007125">
    <property type="entry name" value="Histone_H2A/H2B/H3"/>
</dbReference>
<dbReference type="InterPro" id="IPR032454">
    <property type="entry name" value="Histone_H2A_C"/>
</dbReference>
<dbReference type="InterPro" id="IPR032458">
    <property type="entry name" value="Histone_H2A_CS"/>
</dbReference>
<dbReference type="PANTHER" id="PTHR23430">
    <property type="entry name" value="HISTONE H2A"/>
    <property type="match status" value="1"/>
</dbReference>
<dbReference type="Pfam" id="PF00125">
    <property type="entry name" value="Histone"/>
    <property type="match status" value="1"/>
</dbReference>
<dbReference type="Pfam" id="PF16211">
    <property type="entry name" value="Histone_H2A_C"/>
    <property type="match status" value="1"/>
</dbReference>
<dbReference type="PRINTS" id="PR00620">
    <property type="entry name" value="HISTONEH2A"/>
</dbReference>
<dbReference type="SMART" id="SM00414">
    <property type="entry name" value="H2A"/>
    <property type="match status" value="1"/>
</dbReference>
<dbReference type="SUPFAM" id="SSF47113">
    <property type="entry name" value="Histone-fold"/>
    <property type="match status" value="1"/>
</dbReference>
<dbReference type="PROSITE" id="PS00046">
    <property type="entry name" value="HISTONE_H2A"/>
    <property type="match status" value="1"/>
</dbReference>
<sequence>MSGGKGKAGSSEKASTSRSAKAGLTFPVGRVHRLLRKGNYAQRVGSGAPVYLTSVLEYLAAEILELAGNAARDNKKSRIIPRHLQLAIRNDEELNKLLGHVTIAQGGVLPNIHQSLLPAKKAKAGNASQEL</sequence>
<protein>
    <recommendedName>
        <fullName>Histone H2A.2</fullName>
    </recommendedName>
</protein>
<gene>
    <name type="primary">HTA2</name>
    <name type="ordered locus">DEHA2D16588g</name>
</gene>
<accession>Q6BRG3</accession>
<keyword id="KW-0007">Acetylation</keyword>
<keyword id="KW-0158">Chromosome</keyword>
<keyword id="KW-0227">DNA damage</keyword>
<keyword id="KW-0234">DNA repair</keyword>
<keyword id="KW-0238">DNA-binding</keyword>
<keyword id="KW-0488">Methylation</keyword>
<keyword id="KW-0544">Nucleosome core</keyword>
<keyword id="KW-0539">Nucleus</keyword>
<keyword id="KW-0597">Phosphoprotein</keyword>
<keyword id="KW-1185">Reference proteome</keyword>